<sequence length="243" mass="27512">MNASQDTIYAQASEHISDFQFDNRVAGVFSDMIRRSVPGYTQIINTIGDFADRFVKPNTQVYDLGCSLGAATLSIRRQIQGRDCRIIAVDNSESMVTRCQENLNAYVSDTEVELICGDIRDIHIENASLVVLNFTLQFLPPEDREALIAKIYHGLNPGGLLVLSEKIRFDDAPIQSVLEELHLDFKRANGYSELEISQKRSALENVMKPDTLTLHQQRLTRQGFSHFSLWFQCFNFSSMVAIK</sequence>
<protein>
    <recommendedName>
        <fullName evidence="1">Carboxy-S-adenosyl-L-methionine synthase</fullName>
        <shortName evidence="1">Cx-SAM synthase</shortName>
        <ecNumber evidence="1">2.1.3.-</ecNumber>
    </recommendedName>
</protein>
<comment type="function">
    <text evidence="1">Catalyzes the conversion of S-adenosyl-L-methionine (SAM) to carboxy-S-adenosyl-L-methionine (Cx-SAM).</text>
</comment>
<comment type="catalytic activity">
    <reaction evidence="1">
        <text>prephenate + S-adenosyl-L-methionine = carboxy-S-adenosyl-L-methionine + 3-phenylpyruvate + H2O</text>
        <dbReference type="Rhea" id="RHEA:51692"/>
        <dbReference type="ChEBI" id="CHEBI:15377"/>
        <dbReference type="ChEBI" id="CHEBI:18005"/>
        <dbReference type="ChEBI" id="CHEBI:29934"/>
        <dbReference type="ChEBI" id="CHEBI:59789"/>
        <dbReference type="ChEBI" id="CHEBI:134278"/>
    </reaction>
</comment>
<comment type="subunit">
    <text evidence="1">Homodimer.</text>
</comment>
<comment type="similarity">
    <text evidence="1">Belongs to the class I-like SAM-binding methyltransferase superfamily. Cx-SAM synthase family.</text>
</comment>
<gene>
    <name evidence="1" type="primary">cmoA</name>
    <name type="ordered locus">Shewmr4_1896</name>
</gene>
<reference key="1">
    <citation type="submission" date="2006-08" db="EMBL/GenBank/DDBJ databases">
        <title>Complete sequence of Shewanella sp. MR-4.</title>
        <authorList>
            <consortium name="US DOE Joint Genome Institute"/>
            <person name="Copeland A."/>
            <person name="Lucas S."/>
            <person name="Lapidus A."/>
            <person name="Barry K."/>
            <person name="Detter J.C."/>
            <person name="Glavina del Rio T."/>
            <person name="Hammon N."/>
            <person name="Israni S."/>
            <person name="Dalin E."/>
            <person name="Tice H."/>
            <person name="Pitluck S."/>
            <person name="Kiss H."/>
            <person name="Brettin T."/>
            <person name="Bruce D."/>
            <person name="Han C."/>
            <person name="Tapia R."/>
            <person name="Gilna P."/>
            <person name="Schmutz J."/>
            <person name="Larimer F."/>
            <person name="Land M."/>
            <person name="Hauser L."/>
            <person name="Kyrpides N."/>
            <person name="Mikhailova N."/>
            <person name="Nealson K."/>
            <person name="Konstantinidis K."/>
            <person name="Klappenbach J."/>
            <person name="Tiedje J."/>
            <person name="Richardson P."/>
        </authorList>
    </citation>
    <scope>NUCLEOTIDE SEQUENCE [LARGE SCALE GENOMIC DNA]</scope>
    <source>
        <strain>MR-4</strain>
    </source>
</reference>
<proteinExistence type="inferred from homology"/>
<organism>
    <name type="scientific">Shewanella sp. (strain MR-4)</name>
    <dbReference type="NCBI Taxonomy" id="60480"/>
    <lineage>
        <taxon>Bacteria</taxon>
        <taxon>Pseudomonadati</taxon>
        <taxon>Pseudomonadota</taxon>
        <taxon>Gammaproteobacteria</taxon>
        <taxon>Alteromonadales</taxon>
        <taxon>Shewanellaceae</taxon>
        <taxon>Shewanella</taxon>
    </lineage>
</organism>
<dbReference type="EC" id="2.1.3.-" evidence="1"/>
<dbReference type="EMBL" id="CP000446">
    <property type="protein sequence ID" value="ABI38970.1"/>
    <property type="molecule type" value="Genomic_DNA"/>
</dbReference>
<dbReference type="RefSeq" id="WP_011622667.1">
    <property type="nucleotide sequence ID" value="NC_008321.1"/>
</dbReference>
<dbReference type="SMR" id="Q0HIZ7"/>
<dbReference type="GeneID" id="94727906"/>
<dbReference type="KEGG" id="she:Shewmr4_1896"/>
<dbReference type="HOGENOM" id="CLU_078475_0_0_6"/>
<dbReference type="GO" id="GO:0016743">
    <property type="term" value="F:carboxyl- or carbamoyltransferase activity"/>
    <property type="evidence" value="ECO:0007669"/>
    <property type="project" value="UniProtKB-UniRule"/>
</dbReference>
<dbReference type="GO" id="GO:1904047">
    <property type="term" value="F:S-adenosyl-L-methionine binding"/>
    <property type="evidence" value="ECO:0007669"/>
    <property type="project" value="UniProtKB-UniRule"/>
</dbReference>
<dbReference type="GO" id="GO:0002098">
    <property type="term" value="P:tRNA wobble uridine modification"/>
    <property type="evidence" value="ECO:0007669"/>
    <property type="project" value="InterPro"/>
</dbReference>
<dbReference type="CDD" id="cd02440">
    <property type="entry name" value="AdoMet_MTases"/>
    <property type="match status" value="1"/>
</dbReference>
<dbReference type="Gene3D" id="3.40.50.150">
    <property type="entry name" value="Vaccinia Virus protein VP39"/>
    <property type="match status" value="1"/>
</dbReference>
<dbReference type="HAMAP" id="MF_01589">
    <property type="entry name" value="Cx_SAM_synthase"/>
    <property type="match status" value="1"/>
</dbReference>
<dbReference type="InterPro" id="IPR005271">
    <property type="entry name" value="CmoA"/>
</dbReference>
<dbReference type="InterPro" id="IPR041698">
    <property type="entry name" value="Methyltransf_25"/>
</dbReference>
<dbReference type="InterPro" id="IPR029063">
    <property type="entry name" value="SAM-dependent_MTases_sf"/>
</dbReference>
<dbReference type="NCBIfam" id="TIGR00740">
    <property type="entry name" value="carboxy-S-adenosyl-L-methionine synthase CmoA"/>
    <property type="match status" value="1"/>
</dbReference>
<dbReference type="NCBIfam" id="NF011995">
    <property type="entry name" value="PRK15451.1"/>
    <property type="match status" value="1"/>
</dbReference>
<dbReference type="PANTHER" id="PTHR43861:SF2">
    <property type="entry name" value="CARBOXY-S-ADENOSYL-L-METHIONINE SYNTHASE"/>
    <property type="match status" value="1"/>
</dbReference>
<dbReference type="PANTHER" id="PTHR43861">
    <property type="entry name" value="TRANS-ACONITATE 2-METHYLTRANSFERASE-RELATED"/>
    <property type="match status" value="1"/>
</dbReference>
<dbReference type="Pfam" id="PF13649">
    <property type="entry name" value="Methyltransf_25"/>
    <property type="match status" value="1"/>
</dbReference>
<dbReference type="PIRSF" id="PIRSF006325">
    <property type="entry name" value="MeTrfase_bac"/>
    <property type="match status" value="1"/>
</dbReference>
<dbReference type="SUPFAM" id="SSF53335">
    <property type="entry name" value="S-adenosyl-L-methionine-dependent methyltransferases"/>
    <property type="match status" value="1"/>
</dbReference>
<keyword id="KW-0949">S-adenosyl-L-methionine</keyword>
<keyword id="KW-0808">Transferase</keyword>
<name>CMOA_SHESM</name>
<feature type="chain" id="PRO_0000314384" description="Carboxy-S-adenosyl-L-methionine synthase">
    <location>
        <begin position="1"/>
        <end position="243"/>
    </location>
</feature>
<feature type="binding site" evidence="1">
    <location>
        <position position="40"/>
    </location>
    <ligand>
        <name>S-adenosyl-L-methionine</name>
        <dbReference type="ChEBI" id="CHEBI:59789"/>
    </ligand>
</feature>
<feature type="binding site" evidence="1">
    <location>
        <begin position="65"/>
        <end position="67"/>
    </location>
    <ligand>
        <name>S-adenosyl-L-methionine</name>
        <dbReference type="ChEBI" id="CHEBI:59789"/>
    </ligand>
</feature>
<feature type="binding site" evidence="1">
    <location>
        <begin position="90"/>
        <end position="91"/>
    </location>
    <ligand>
        <name>S-adenosyl-L-methionine</name>
        <dbReference type="ChEBI" id="CHEBI:59789"/>
    </ligand>
</feature>
<feature type="binding site" evidence="1">
    <location>
        <begin position="118"/>
        <end position="119"/>
    </location>
    <ligand>
        <name>S-adenosyl-L-methionine</name>
        <dbReference type="ChEBI" id="CHEBI:59789"/>
    </ligand>
</feature>
<feature type="binding site" evidence="1">
    <location>
        <position position="133"/>
    </location>
    <ligand>
        <name>S-adenosyl-L-methionine</name>
        <dbReference type="ChEBI" id="CHEBI:59789"/>
    </ligand>
</feature>
<feature type="binding site" evidence="1">
    <location>
        <position position="200"/>
    </location>
    <ligand>
        <name>S-adenosyl-L-methionine</name>
        <dbReference type="ChEBI" id="CHEBI:59789"/>
    </ligand>
</feature>
<accession>Q0HIZ7</accession>
<evidence type="ECO:0000255" key="1">
    <source>
        <dbReference type="HAMAP-Rule" id="MF_01589"/>
    </source>
</evidence>